<sequence>MSDTNKEVVDLVWGRPSGGGVPASLFRRWSQGFVFSETERSALEQFEGGPCAVIAPVQAFLLKNILFNTEGLNWKDISEEEQRTVLCSTLSEILELACLNKSQAFHLVTWPHAKTTDNSDITDSHPEPESSQPTDTPTALATEELGFERFHSVIQKRTLRTVAELKEAVLSLYDTWKNKFGVLLFLYSVILTKGIENIKNEIEDTTEPLIDPVYGHGSQSLINLLVTGHAVSNVWDGDRECSGMKLHGIYQQASVGFLTLMESLRYCKVGAFLKSPKFPIWILGSETHLSVFFTKEMALVAPESASEQARRVFQTFDPEDNGFIPDTLLEDVMKALDLVSEPDYVNLMKSKLDPEGLGIILLGQFLLEFFPDQDSVIPDSFPVYHYNGLKQSNHNEKVSYVEGTALVMGFEDPMVRTDDTPVKRCLQTKWPYIELLWTTERSPSLN</sequence>
<gene>
    <name type="primary">mindy3</name>
    <name type="synonym">carp</name>
    <name type="synonym">fam188a</name>
    <name type="ORF">zgc:153892</name>
</gene>
<reference key="1">
    <citation type="submission" date="2006-10" db="EMBL/GenBank/DDBJ databases">
        <authorList>
            <consortium name="NIH - Zebrafish Gene Collection (ZGC) project"/>
        </authorList>
    </citation>
    <scope>NUCLEOTIDE SEQUENCE [LARGE SCALE MRNA]</scope>
</reference>
<name>MINY3_DANRE</name>
<dbReference type="EC" id="3.4.19.12"/>
<dbReference type="EMBL" id="BC124766">
    <property type="protein sequence ID" value="AAI24767.1"/>
    <property type="molecule type" value="mRNA"/>
</dbReference>
<dbReference type="RefSeq" id="NP_001071224.1">
    <property type="nucleotide sequence ID" value="NM_001077756.1"/>
</dbReference>
<dbReference type="RefSeq" id="XP_068070122.1">
    <property type="nucleotide sequence ID" value="XM_068214021.1"/>
</dbReference>
<dbReference type="FunCoup" id="A0AUR5">
    <property type="interactions" value="1788"/>
</dbReference>
<dbReference type="STRING" id="7955.ENSDARP00000059034"/>
<dbReference type="PaxDb" id="7955-ENSDARP00000059034"/>
<dbReference type="PeptideAtlas" id="A0AUR5"/>
<dbReference type="Ensembl" id="ENSDART00000059035">
    <property type="protein sequence ID" value="ENSDARP00000059034"/>
    <property type="gene ID" value="ENSDARG00000028715"/>
</dbReference>
<dbReference type="GeneID" id="777708"/>
<dbReference type="KEGG" id="dre:777708"/>
<dbReference type="AGR" id="ZFIN:ZDB-GENE-061110-13"/>
<dbReference type="CTD" id="80013"/>
<dbReference type="ZFIN" id="ZDB-GENE-061110-13">
    <property type="gene designation" value="mindy3"/>
</dbReference>
<dbReference type="eggNOG" id="KOG2871">
    <property type="taxonomic scope" value="Eukaryota"/>
</dbReference>
<dbReference type="HOGENOM" id="CLU_033478_0_0_1"/>
<dbReference type="InParanoid" id="A0AUR5"/>
<dbReference type="OMA" id="VLQTKWP"/>
<dbReference type="OrthoDB" id="9981542at2759"/>
<dbReference type="PhylomeDB" id="A0AUR5"/>
<dbReference type="TreeFam" id="TF323996"/>
<dbReference type="PRO" id="PR:A0AUR5"/>
<dbReference type="Proteomes" id="UP000000437">
    <property type="component" value="Chromosome 16"/>
</dbReference>
<dbReference type="Bgee" id="ENSDARG00000028715">
    <property type="expression patterns" value="Expressed in testis and 27 other cell types or tissues"/>
</dbReference>
<dbReference type="GO" id="GO:0005634">
    <property type="term" value="C:nucleus"/>
    <property type="evidence" value="ECO:0007669"/>
    <property type="project" value="UniProtKB-SubCell"/>
</dbReference>
<dbReference type="GO" id="GO:0004843">
    <property type="term" value="F:cysteine-type deubiquitinase activity"/>
    <property type="evidence" value="ECO:0007669"/>
    <property type="project" value="UniProtKB-EC"/>
</dbReference>
<dbReference type="GO" id="GO:1990380">
    <property type="term" value="F:K48-linked deubiquitinase activity"/>
    <property type="evidence" value="ECO:0000318"/>
    <property type="project" value="GO_Central"/>
</dbReference>
<dbReference type="GO" id="GO:0006915">
    <property type="term" value="P:apoptotic process"/>
    <property type="evidence" value="ECO:0007669"/>
    <property type="project" value="UniProtKB-KW"/>
</dbReference>
<dbReference type="GO" id="GO:0071108">
    <property type="term" value="P:protein K48-linked deubiquitination"/>
    <property type="evidence" value="ECO:0007669"/>
    <property type="project" value="InterPro"/>
</dbReference>
<dbReference type="GO" id="GO:0006508">
    <property type="term" value="P:proteolysis"/>
    <property type="evidence" value="ECO:0007669"/>
    <property type="project" value="UniProtKB-KW"/>
</dbReference>
<dbReference type="FunFam" id="1.10.238.10:FF:000315">
    <property type="entry name" value="Ubiquitin carboxyl-terminal hydrolase MINDY-3"/>
    <property type="match status" value="1"/>
</dbReference>
<dbReference type="Gene3D" id="1.10.238.10">
    <property type="entry name" value="EF-hand"/>
    <property type="match status" value="1"/>
</dbReference>
<dbReference type="InterPro" id="IPR011992">
    <property type="entry name" value="EF-hand-dom_pair"/>
</dbReference>
<dbReference type="InterPro" id="IPR025257">
    <property type="entry name" value="MINDY-3/4_CD"/>
</dbReference>
<dbReference type="InterPro" id="IPR039785">
    <property type="entry name" value="MINY3/4"/>
</dbReference>
<dbReference type="PANTHER" id="PTHR12473:SF17">
    <property type="entry name" value="UBIQUITIN CARBOXYL-TERMINAL HYDROLASE MINDY-3"/>
    <property type="match status" value="1"/>
</dbReference>
<dbReference type="PANTHER" id="PTHR12473">
    <property type="entry name" value="UBIQUITIN CARBOXYL-TERMINAL HYDROLASE MINDY-4-RELATED"/>
    <property type="match status" value="1"/>
</dbReference>
<dbReference type="Pfam" id="PF13898">
    <property type="entry name" value="MINDY-3_4_CD"/>
    <property type="match status" value="1"/>
</dbReference>
<dbReference type="SMART" id="SM01174">
    <property type="entry name" value="DUF4205"/>
    <property type="match status" value="1"/>
</dbReference>
<dbReference type="SUPFAM" id="SSF47473">
    <property type="entry name" value="EF-hand"/>
    <property type="match status" value="1"/>
</dbReference>
<feature type="chain" id="PRO_0000317563" description="Ubiquitin carboxyl-terminal hydrolase MINDY-3">
    <location>
        <begin position="1"/>
        <end position="446"/>
    </location>
</feature>
<feature type="region of interest" description="Disordered" evidence="3">
    <location>
        <begin position="117"/>
        <end position="137"/>
    </location>
</feature>
<feature type="compositionally biased region" description="Basic and acidic residues" evidence="3">
    <location>
        <begin position="117"/>
        <end position="128"/>
    </location>
</feature>
<feature type="active site" description="Nucleophile" evidence="1">
    <location>
        <position position="51"/>
    </location>
</feature>
<feature type="active site" description="Proton acceptor" evidence="1">
    <location>
        <position position="288"/>
    </location>
</feature>
<protein>
    <recommendedName>
        <fullName>Ubiquitin carboxyl-terminal hydrolase MINDY-3</fullName>
        <ecNumber>3.4.19.12</ecNumber>
    </recommendedName>
    <alternativeName>
        <fullName>Deubiquitinating enzyme MINDY-3</fullName>
    </alternativeName>
    <alternativeName>
        <fullName>Protein CARP</fullName>
    </alternativeName>
</protein>
<keyword id="KW-0053">Apoptosis</keyword>
<keyword id="KW-0378">Hydrolase</keyword>
<keyword id="KW-0539">Nucleus</keyword>
<keyword id="KW-0645">Protease</keyword>
<keyword id="KW-1185">Reference proteome</keyword>
<keyword id="KW-0788">Thiol protease</keyword>
<keyword id="KW-0833">Ubl conjugation pathway</keyword>
<proteinExistence type="evidence at transcript level"/>
<comment type="function">
    <text evidence="2">Hydrolase that can remove 'Lys-48'-linked conjugated ubiquitin from proteins.</text>
</comment>
<comment type="catalytic activity">
    <reaction evidence="2">
        <text>Thiol-dependent hydrolysis of ester, thioester, amide, peptide and isopeptide bonds formed by the C-terminal Gly of ubiquitin (a 76-residue protein attached to proteins as an intracellular targeting signal).</text>
        <dbReference type="EC" id="3.4.19.12"/>
    </reaction>
</comment>
<comment type="subcellular location">
    <subcellularLocation>
        <location evidence="2">Nucleus</location>
    </subcellularLocation>
</comment>
<comment type="similarity">
    <text evidence="4">Belongs to the MINDY deubiquitinase family. FAM188 subfamily.</text>
</comment>
<organism>
    <name type="scientific">Danio rerio</name>
    <name type="common">Zebrafish</name>
    <name type="synonym">Brachydanio rerio</name>
    <dbReference type="NCBI Taxonomy" id="7955"/>
    <lineage>
        <taxon>Eukaryota</taxon>
        <taxon>Metazoa</taxon>
        <taxon>Chordata</taxon>
        <taxon>Craniata</taxon>
        <taxon>Vertebrata</taxon>
        <taxon>Euteleostomi</taxon>
        <taxon>Actinopterygii</taxon>
        <taxon>Neopterygii</taxon>
        <taxon>Teleostei</taxon>
        <taxon>Ostariophysi</taxon>
        <taxon>Cypriniformes</taxon>
        <taxon>Danionidae</taxon>
        <taxon>Danioninae</taxon>
        <taxon>Danio</taxon>
    </lineage>
</organism>
<evidence type="ECO:0000250" key="1">
    <source>
        <dbReference type="UniProtKB" id="Q8N5J2"/>
    </source>
</evidence>
<evidence type="ECO:0000250" key="2">
    <source>
        <dbReference type="UniProtKB" id="Q9H8M7"/>
    </source>
</evidence>
<evidence type="ECO:0000256" key="3">
    <source>
        <dbReference type="SAM" id="MobiDB-lite"/>
    </source>
</evidence>
<evidence type="ECO:0000305" key="4"/>
<accession>A0AUR5</accession>